<evidence type="ECO:0000250" key="1"/>
<evidence type="ECO:0000269" key="2">
    <source>
    </source>
</evidence>
<evidence type="ECO:0000305" key="3"/>
<protein>
    <recommendedName>
        <fullName>Malonyl CoA reductase (NADP)</fullName>
        <ecNumber>1.2.1.75</ecNumber>
    </recommendedName>
    <alternativeName>
        <fullName>NADP-dependent malonyl CoA reductase</fullName>
    </alternativeName>
</protein>
<comment type="function">
    <text evidence="2">Catalyzes the reduction of malonyl-CoA to malonate semialdehyde, a key step in the 3-hydroxypropanoate and the 3-hydroxypropanoate/4-hydroxybutyrate cycles.</text>
</comment>
<comment type="catalytic activity">
    <reaction>
        <text>3-oxopropanoate + NADP(+) + CoA = malonyl-CoA + NADPH + H(+)</text>
        <dbReference type="Rhea" id="RHEA:26446"/>
        <dbReference type="ChEBI" id="CHEBI:15378"/>
        <dbReference type="ChEBI" id="CHEBI:33190"/>
        <dbReference type="ChEBI" id="CHEBI:57287"/>
        <dbReference type="ChEBI" id="CHEBI:57384"/>
        <dbReference type="ChEBI" id="CHEBI:57783"/>
        <dbReference type="ChEBI" id="CHEBI:58349"/>
        <dbReference type="EC" id="1.2.1.75"/>
    </reaction>
</comment>
<comment type="biophysicochemical properties">
    <kinetics>
        <KM evidence="2">0.1 mM for malonyl-CoA (with 0.5 mM NADP)</KM>
    </kinetics>
    <phDependence>
        <text evidence="2">Optimum pH is 7.8, with half-maximal activities at pH 6.5 and 8.5.</text>
    </phDependence>
    <temperatureDependence>
        <text evidence="2">Optimum temperature is 85 degrees Celsius.</text>
    </temperatureDependence>
</comment>
<comment type="subunit">
    <text evidence="2">Homotetramer.</text>
</comment>
<comment type="similarity">
    <text evidence="3">Belongs to the aspartate-semialdehyde dehydrogenase family.</text>
</comment>
<feature type="chain" id="PRO_0000418854" description="Malonyl CoA reductase (NADP)">
    <location>
        <begin position="1"/>
        <end position="357"/>
    </location>
</feature>
<feature type="active site" description="Acyl-thioester intermediate" evidence="1">
    <location>
        <position position="150"/>
    </location>
</feature>
<feature type="active site" description="Proton acceptor" evidence="1">
    <location>
        <position position="245"/>
    </location>
</feature>
<feature type="binding site" evidence="1">
    <location>
        <begin position="13"/>
        <end position="16"/>
    </location>
    <ligand>
        <name>NADP(+)</name>
        <dbReference type="ChEBI" id="CHEBI:58349"/>
    </ligand>
</feature>
<feature type="binding site" evidence="1">
    <location>
        <begin position="180"/>
        <end position="181"/>
    </location>
    <ligand>
        <name>NADP(+)</name>
        <dbReference type="ChEBI" id="CHEBI:58349"/>
    </ligand>
</feature>
<feature type="binding site" evidence="1">
    <location>
        <begin position="332"/>
        <end position="333"/>
    </location>
    <ligand>
        <name>NADP(+)</name>
        <dbReference type="ChEBI" id="CHEBI:58349"/>
    </ligand>
</feature>
<reference key="1">
    <citation type="journal article" date="2008" name="Appl. Environ. Microbiol.">
        <title>The genome sequence of the metal-mobilizing, extremely thermoacidophilic archaeon Metallosphaera sedula provides insights into bioleaching-associated metabolism.</title>
        <authorList>
            <person name="Auernik K.S."/>
            <person name="Maezato Y."/>
            <person name="Blum P.H."/>
            <person name="Kelly R.M."/>
        </authorList>
    </citation>
    <scope>NUCLEOTIDE SEQUENCE [LARGE SCALE GENOMIC DNA]</scope>
    <source>
        <strain>ATCC 51363 / DSM 5348 / JCM 9185 / NBRC 15509 / TH2</strain>
    </source>
</reference>
<reference key="2">
    <citation type="journal article" date="2006" name="J. Bacteriol.">
        <title>Malonyl-coenzyme A reductase in the modified 3-hydroxypropionate cycle for autotrophic carbon fixation in archaeal Metallosphaera and Sulfolobus spp.</title>
        <authorList>
            <person name="Alber B."/>
            <person name="Olinger M."/>
            <person name="Rieder A."/>
            <person name="Kockelkorn D."/>
            <person name="Jobst B."/>
            <person name="Hugler M."/>
            <person name="Fuchs G."/>
        </authorList>
    </citation>
    <scope>PROTEIN SEQUENCE OF 1-20</scope>
    <scope>FUNCTION AS A MALONYL COA REDUCTASE</scope>
    <scope>BIOPHYSICOCHEMICAL PROPERTIES</scope>
    <scope>SUBUNIT</scope>
</reference>
<organism>
    <name type="scientific">Metallosphaera sedula (strain ATCC 51363 / DSM 5348 / JCM 9185 / NBRC 15509 / TH2)</name>
    <dbReference type="NCBI Taxonomy" id="399549"/>
    <lineage>
        <taxon>Archaea</taxon>
        <taxon>Thermoproteota</taxon>
        <taxon>Thermoprotei</taxon>
        <taxon>Sulfolobales</taxon>
        <taxon>Sulfolobaceae</taxon>
        <taxon>Metallosphaera</taxon>
    </lineage>
</organism>
<name>MCR_METS5</name>
<proteinExistence type="evidence at protein level"/>
<accession>A4YEN2</accession>
<sequence length="357" mass="39255">MRRTLKAAILGATGLVGIEYVRMLADHPYIKPTYLAGKGSVGKPYGEIVRWQTVGNVPKEVANQEVKPTDPKLMDDVDIIFSPLPQGAAGPVEEQFAKLGFNVISNSPDHRFDMDVPMIIPEVNPHTVTLIDEQRKRRDWKGFIVTTPLCTAQGAAIPLTPIYQNFKMSGVMITTMQSLSGAGYPGIASLDIVDNALPLGDGYDAKTVKEITRILSEVKRNVQEPGVNEITLDATTHRIATIHGHYEVAYVTFKEDTDVRKVMESMESFKGEPQDLKLPTAPEKPIIVTTQDARPQVFFDRWAGNPPGMSVVVGRLKQVNPRTIRFVSLIHNTVRGAAGGGVLTAELLVEKGYIDKR</sequence>
<dbReference type="EC" id="1.2.1.75"/>
<dbReference type="EMBL" id="CP000682">
    <property type="protein sequence ID" value="ABP94884.1"/>
    <property type="molecule type" value="Genomic_DNA"/>
</dbReference>
<dbReference type="RefSeq" id="WP_012020671.1">
    <property type="nucleotide sequence ID" value="NC_009440.1"/>
</dbReference>
<dbReference type="SMR" id="A4YEN2"/>
<dbReference type="STRING" id="399549.Msed_0709"/>
<dbReference type="GeneID" id="91755162"/>
<dbReference type="KEGG" id="mse:Msed_0709"/>
<dbReference type="eggNOG" id="arCOG00494">
    <property type="taxonomic scope" value="Archaea"/>
</dbReference>
<dbReference type="HOGENOM" id="CLU_049966_1_0_2"/>
<dbReference type="BioCyc" id="MetaCyc:MONOMER-13726"/>
<dbReference type="Proteomes" id="UP000000242">
    <property type="component" value="Chromosome"/>
</dbReference>
<dbReference type="GO" id="GO:0004073">
    <property type="term" value="F:aspartate-semialdehyde dehydrogenase activity"/>
    <property type="evidence" value="ECO:0007669"/>
    <property type="project" value="UniProtKB-ARBA"/>
</dbReference>
<dbReference type="GO" id="GO:0051287">
    <property type="term" value="F:NAD binding"/>
    <property type="evidence" value="ECO:0007669"/>
    <property type="project" value="InterPro"/>
</dbReference>
<dbReference type="GO" id="GO:0050661">
    <property type="term" value="F:NADP binding"/>
    <property type="evidence" value="ECO:0007669"/>
    <property type="project" value="InterPro"/>
</dbReference>
<dbReference type="GO" id="GO:0046983">
    <property type="term" value="F:protein dimerization activity"/>
    <property type="evidence" value="ECO:0007669"/>
    <property type="project" value="InterPro"/>
</dbReference>
<dbReference type="GO" id="GO:0009086">
    <property type="term" value="P:methionine biosynthetic process"/>
    <property type="evidence" value="ECO:0007669"/>
    <property type="project" value="UniProtKB-ARBA"/>
</dbReference>
<dbReference type="GO" id="GO:0009088">
    <property type="term" value="P:threonine biosynthetic process"/>
    <property type="evidence" value="ECO:0007669"/>
    <property type="project" value="TreeGrafter"/>
</dbReference>
<dbReference type="CDD" id="cd23940">
    <property type="entry name" value="ASADH_C_MCR"/>
    <property type="match status" value="1"/>
</dbReference>
<dbReference type="CDD" id="cd24150">
    <property type="entry name" value="ASADH_MCR_N"/>
    <property type="match status" value="1"/>
</dbReference>
<dbReference type="FunFam" id="3.40.50.720:FF:000411">
    <property type="entry name" value="Aspartate-semialdehyde dehydrogenase"/>
    <property type="match status" value="1"/>
</dbReference>
<dbReference type="Gene3D" id="3.30.360.10">
    <property type="entry name" value="Dihydrodipicolinate Reductase, domain 2"/>
    <property type="match status" value="1"/>
</dbReference>
<dbReference type="Gene3D" id="3.40.50.720">
    <property type="entry name" value="NAD(P)-binding Rossmann-like Domain"/>
    <property type="match status" value="1"/>
</dbReference>
<dbReference type="InterPro" id="IPR051823">
    <property type="entry name" value="ASADH-related"/>
</dbReference>
<dbReference type="InterPro" id="IPR005676">
    <property type="entry name" value="Asp_semi-ald_DH_pep-lack"/>
</dbReference>
<dbReference type="InterPro" id="IPR036291">
    <property type="entry name" value="NAD(P)-bd_dom_sf"/>
</dbReference>
<dbReference type="InterPro" id="IPR000534">
    <property type="entry name" value="Semialdehyde_DH_NAD-bd"/>
</dbReference>
<dbReference type="InterPro" id="IPR012280">
    <property type="entry name" value="Semialdhyde_DH_dimer_dom"/>
</dbReference>
<dbReference type="NCBIfam" id="TIGR00978">
    <property type="entry name" value="asd_EA"/>
    <property type="match status" value="1"/>
</dbReference>
<dbReference type="NCBIfam" id="NF006416">
    <property type="entry name" value="PRK08664.1"/>
    <property type="match status" value="1"/>
</dbReference>
<dbReference type="PANTHER" id="PTHR46718">
    <property type="entry name" value="ASPARTATE-SEMIALDEHYDE DEHYDROGENASE"/>
    <property type="match status" value="1"/>
</dbReference>
<dbReference type="PANTHER" id="PTHR46718:SF1">
    <property type="entry name" value="ASPARTATE-SEMIALDEHYDE DEHYDROGENASE"/>
    <property type="match status" value="1"/>
</dbReference>
<dbReference type="Pfam" id="PF01118">
    <property type="entry name" value="Semialdhyde_dh"/>
    <property type="match status" value="1"/>
</dbReference>
<dbReference type="Pfam" id="PF02774">
    <property type="entry name" value="Semialdhyde_dhC"/>
    <property type="match status" value="1"/>
</dbReference>
<dbReference type="PIRSF" id="PIRSF000148">
    <property type="entry name" value="ASA_dh"/>
    <property type="match status" value="1"/>
</dbReference>
<dbReference type="SMART" id="SM00859">
    <property type="entry name" value="Semialdhyde_dh"/>
    <property type="match status" value="1"/>
</dbReference>
<dbReference type="SUPFAM" id="SSF55347">
    <property type="entry name" value="Glyceraldehyde-3-phosphate dehydrogenase-like, C-terminal domain"/>
    <property type="match status" value="1"/>
</dbReference>
<dbReference type="SUPFAM" id="SSF51735">
    <property type="entry name" value="NAD(P)-binding Rossmann-fold domains"/>
    <property type="match status" value="1"/>
</dbReference>
<keyword id="KW-0903">Direct protein sequencing</keyword>
<keyword id="KW-0521">NADP</keyword>
<keyword id="KW-0560">Oxidoreductase</keyword>
<keyword id="KW-1185">Reference proteome</keyword>
<gene>
    <name type="ordered locus">Msed_0709</name>
</gene>